<comment type="function">
    <text evidence="1 2 3">The insulin-like growth factors, isolated from plasma, are structurally and functionally related to insulin but have a much higher growth-promoting activity. May be a physiological regulator of [1-14C]-2-deoxy-D-glucose (2DG) transport and glycogen synthesis in osteoblasts. Stimulates glucose transport in bone-derived osteoblastic (PyMS) cells and is effective at much lower concentrations than insulin, not only regarding glycogen and DNA synthesis but also with regard to enhancing glucose uptake. May play a role in synapse maturation. Ca(2+)-dependent exocytosis of IGF1 is required for sensory perception of smell in the olfactory bulb. Acts as a ligand for IGF1R. Binds to the alpha subunit of IGF1R, leading to the activation of the intrinsic tyrosine kinase activity which autophosphorylates tyrosine residues in the beta subunit thus initiating a cascade of down-stream signaling events leading to activation of the PI3K-AKT/PKB and the Ras-MAPK pathways. Binds to integrins ITGAV:ITGB3 and ITGA6:ITGB4. Its binding to integrins and subsequent ternary complex formation with integrins and IGFR1 are essential for IGF1 signaling. Induces the phosphorylation and activation of IGFR1, MAPK3/ERK1, MAPK1/ERK2 and AKT1 (By similarity). As part of the MAPK/ERK signaling pathway, acts as a negative regulator of apoptosis in cardiomyocytes via promotion of STUB1/CHIP-mediated ubiquitination and degradation of ICER-type isoforms of CREM (By similarity).</text>
</comment>
<comment type="subunit">
    <text evidence="2">Forms a ternary complex with IGFR1 and ITGAV:ITGB3. Forms a ternary complex with IGFR1 and ITGA6:ITGB4. Forms a ternary complex with IGFBP3 and ALS.</text>
</comment>
<comment type="subcellular location">
    <subcellularLocation>
        <location evidence="1">Secreted</location>
    </subcellularLocation>
</comment>
<comment type="similarity">
    <text evidence="8">Belongs to the insulin family.</text>
</comment>
<accession>P07455</accession>
<sequence length="154" mass="17066">MGKISSLPTQLFKCCFCDFLKQVKMPITSSSHLFYLALCLLAFTSSATAGPETLCGAELVDALQFVCGDRGFYFNKPTGYGSSSRRAPQTGIVDECCFRSCDLRRLEMYCAPLKPAKSARSVRAQRHTDMPKAQKEVHLKNTSRGSAGNKNYRM</sequence>
<feature type="signal peptide" evidence="4">
    <location>
        <begin position="1"/>
        <end status="unknown"/>
    </location>
</feature>
<feature type="propeptide" id="PRO_0000015647">
    <location>
        <begin status="unknown"/>
        <end position="49"/>
    </location>
</feature>
<feature type="chain" id="PRO_0000015648" description="Insulin-like growth factor 1">
    <location>
        <begin position="50"/>
        <end position="119"/>
    </location>
</feature>
<feature type="propeptide" id="PRO_0000015649" description="E peptide">
    <location>
        <begin position="120"/>
        <end position="154"/>
    </location>
</feature>
<feature type="region of interest" description="B">
    <location>
        <begin position="50"/>
        <end position="78"/>
    </location>
</feature>
<feature type="region of interest" description="C">
    <location>
        <begin position="79"/>
        <end position="90"/>
    </location>
</feature>
<feature type="region of interest" description="A">
    <location>
        <begin position="91"/>
        <end position="111"/>
    </location>
</feature>
<feature type="region of interest" description="D">
    <location>
        <begin position="112"/>
        <end position="119"/>
    </location>
</feature>
<feature type="region of interest" description="Disordered" evidence="5">
    <location>
        <begin position="121"/>
        <end position="154"/>
    </location>
</feature>
<feature type="compositionally biased region" description="Basic and acidic residues" evidence="5">
    <location>
        <begin position="126"/>
        <end position="139"/>
    </location>
</feature>
<feature type="compositionally biased region" description="Polar residues" evidence="5">
    <location>
        <begin position="140"/>
        <end position="154"/>
    </location>
</feature>
<feature type="disulfide bond" evidence="2">
    <location>
        <begin position="55"/>
        <end position="97"/>
    </location>
</feature>
<feature type="disulfide bond" evidence="2">
    <location>
        <begin position="67"/>
        <end position="110"/>
    </location>
</feature>
<feature type="disulfide bond" evidence="2">
    <location>
        <begin position="96"/>
        <end position="101"/>
    </location>
</feature>
<proteinExistence type="evidence at protein level"/>
<protein>
    <recommendedName>
        <fullName evidence="2">Insulin-like growth factor 1</fullName>
    </recommendedName>
    <alternativeName>
        <fullName evidence="7">Insulin-like growth factor I</fullName>
        <shortName evidence="7">IGF-I</shortName>
    </alternativeName>
    <alternativeName>
        <fullName>Somatomedin</fullName>
    </alternativeName>
</protein>
<organism>
    <name type="scientific">Bos taurus</name>
    <name type="common">Bovine</name>
    <dbReference type="NCBI Taxonomy" id="9913"/>
    <lineage>
        <taxon>Eukaryota</taxon>
        <taxon>Metazoa</taxon>
        <taxon>Chordata</taxon>
        <taxon>Craniata</taxon>
        <taxon>Vertebrata</taxon>
        <taxon>Euteleostomi</taxon>
        <taxon>Mammalia</taxon>
        <taxon>Eutheria</taxon>
        <taxon>Laurasiatheria</taxon>
        <taxon>Artiodactyla</taxon>
        <taxon>Ruminantia</taxon>
        <taxon>Pecora</taxon>
        <taxon>Bovidae</taxon>
        <taxon>Bovinae</taxon>
        <taxon>Bos</taxon>
    </lineage>
</organism>
<evidence type="ECO:0000250" key="1">
    <source>
        <dbReference type="UniProtKB" id="P05017"/>
    </source>
</evidence>
<evidence type="ECO:0000250" key="2">
    <source>
        <dbReference type="UniProtKB" id="P05019"/>
    </source>
</evidence>
<evidence type="ECO:0000250" key="3">
    <source>
        <dbReference type="UniProtKB" id="P08025"/>
    </source>
</evidence>
<evidence type="ECO:0000255" key="4"/>
<evidence type="ECO:0000256" key="5">
    <source>
        <dbReference type="SAM" id="MobiDB-lite"/>
    </source>
</evidence>
<evidence type="ECO:0000303" key="6">
    <source>
    </source>
</evidence>
<evidence type="ECO:0000303" key="7">
    <source>
    </source>
</evidence>
<evidence type="ECO:0000305" key="8"/>
<reference key="1">
    <citation type="journal article" date="1990" name="Nucleic Acids Res.">
        <title>Nucleotide sequence of the bovine insulin-like growth factor 1 (IGF-1) and its IGF-1A precursor.</title>
        <authorList>
            <person name="Fotsis T."/>
            <person name="Murphy C."/>
            <person name="Gannon F."/>
        </authorList>
    </citation>
    <scope>NUCLEOTIDE SEQUENCE [MRNA] OF 2-154</scope>
</reference>
<reference key="2">
    <citation type="journal article" date="1994" name="Exp. Clin. Endocrinol.">
        <title>Expression of insulin-like growth factor 1 (IGF-1) in the bovine oviduct during the oestrous cycle.</title>
        <authorList>
            <person name="Schmidt A."/>
            <person name="Einspanier R."/>
            <person name="Amselgruber W."/>
            <person name="Sinowatz F."/>
            <person name="Schams D."/>
        </authorList>
    </citation>
    <scope>NUCLEOTIDE SEQUENCE [MRNA] OF 50-119</scope>
</reference>
<reference key="3">
    <citation type="journal article" date="1986" name="J. Biol. Chem.">
        <title>Insulin-like growth factors I and II in fetal and adult bovine serum. Purification, primary structures, and immunological cross-reactivities.</title>
        <authorList>
            <person name="Honegger A."/>
            <person name="Humbel R.E."/>
        </authorList>
    </citation>
    <scope>PROTEIN SEQUENCE OF 50-119</scope>
</reference>
<reference key="4">
    <citation type="journal article" date="1988" name="Biochem. J.">
        <title>Insulin-like growth factors 1 and 2 in bovine colostrum. Sequences and biological activities compared with those of a potent truncated form.</title>
        <authorList>
            <person name="Francis G.L."/>
            <person name="Upton F.M."/>
            <person name="Ballard F.J."/>
            <person name="McNeil K.A."/>
            <person name="Wallace J.C."/>
        </authorList>
    </citation>
    <scope>PROTEIN SEQUENCE OF 50-119</scope>
</reference>
<name>IGF1_BOVIN</name>
<gene>
    <name evidence="2" type="primary">IGF1</name>
    <name evidence="6" type="synonym">IGF-1</name>
</gene>
<keyword id="KW-0903">Direct protein sequencing</keyword>
<keyword id="KW-1015">Disulfide bond</keyword>
<keyword id="KW-0339">Growth factor</keyword>
<keyword id="KW-1185">Reference proteome</keyword>
<keyword id="KW-0964">Secreted</keyword>
<keyword id="KW-0732">Signal</keyword>
<dbReference type="EMBL" id="X15726">
    <property type="protein sequence ID" value="CAA33746.1"/>
    <property type="molecule type" value="mRNA"/>
</dbReference>
<dbReference type="EMBL" id="S76122">
    <property type="protein sequence ID" value="AAD14209.1"/>
    <property type="molecule type" value="mRNA"/>
</dbReference>
<dbReference type="PIR" id="S12672">
    <property type="entry name" value="IGBO1"/>
</dbReference>
<dbReference type="RefSeq" id="NP_001071296.1">
    <property type="nucleotide sequence ID" value="NM_001077828.1"/>
</dbReference>
<dbReference type="BMRB" id="P07455"/>
<dbReference type="SMR" id="P07455"/>
<dbReference type="FunCoup" id="P07455">
    <property type="interactions" value="611"/>
</dbReference>
<dbReference type="STRING" id="9913.ENSBTAP00000055243"/>
<dbReference type="PaxDb" id="9913-ENSBTAP00000055243"/>
<dbReference type="GeneID" id="281239"/>
<dbReference type="KEGG" id="bta:281239"/>
<dbReference type="CTD" id="3479"/>
<dbReference type="VEuPathDB" id="HostDB:ENSBTAG00000011082"/>
<dbReference type="eggNOG" id="ENOG502RCAB">
    <property type="taxonomic scope" value="Eukaryota"/>
</dbReference>
<dbReference type="HOGENOM" id="CLU_123939_0_0_1"/>
<dbReference type="InParanoid" id="P07455"/>
<dbReference type="OMA" id="TLLFKCC"/>
<dbReference type="OrthoDB" id="8936076at2759"/>
<dbReference type="Reactome" id="R-BTA-114608">
    <property type="pathway name" value="Platelet degranulation"/>
</dbReference>
<dbReference type="Reactome" id="R-BTA-2404192">
    <property type="pathway name" value="Signaling by Type 1 Insulin-like Growth Factor 1 Receptor (IGF1R)"/>
</dbReference>
<dbReference type="Reactome" id="R-BTA-2428928">
    <property type="pathway name" value="IRS-related events triggered by IGF1R"/>
</dbReference>
<dbReference type="Reactome" id="R-BTA-2428933">
    <property type="pathway name" value="SHC-related events triggered by IGF1R"/>
</dbReference>
<dbReference type="Reactome" id="R-BTA-381426">
    <property type="pathway name" value="Regulation of Insulin-like Growth Factor (IGF) transport and uptake by Insulin-like Growth Factor Binding Proteins (IGFBPs)"/>
</dbReference>
<dbReference type="Reactome" id="R-BTA-422085">
    <property type="pathway name" value="Synthesis, secretion, and deacylation of Ghrelin"/>
</dbReference>
<dbReference type="Proteomes" id="UP000009136">
    <property type="component" value="Chromosome 5"/>
</dbReference>
<dbReference type="Bgee" id="ENSBTAG00000011082">
    <property type="expression patterns" value="Expressed in myometrium and 100 other cell types or tissues"/>
</dbReference>
<dbReference type="GO" id="GO:0035867">
    <property type="term" value="C:alphav-beta3 integrin-IGF-1-IGF1R complex"/>
    <property type="evidence" value="ECO:0000250"/>
    <property type="project" value="UniProtKB"/>
</dbReference>
<dbReference type="GO" id="GO:0070382">
    <property type="term" value="C:exocytic vesicle"/>
    <property type="evidence" value="ECO:0000250"/>
    <property type="project" value="UniProtKB"/>
</dbReference>
<dbReference type="GO" id="GO:0005615">
    <property type="term" value="C:extracellular space"/>
    <property type="evidence" value="ECO:0000314"/>
    <property type="project" value="AgBase"/>
</dbReference>
<dbReference type="GO" id="GO:0008083">
    <property type="term" value="F:growth factor activity"/>
    <property type="evidence" value="ECO:0007669"/>
    <property type="project" value="UniProtKB-KW"/>
</dbReference>
<dbReference type="GO" id="GO:0005179">
    <property type="term" value="F:hormone activity"/>
    <property type="evidence" value="ECO:0000318"/>
    <property type="project" value="GO_Central"/>
</dbReference>
<dbReference type="GO" id="GO:0005159">
    <property type="term" value="F:insulin-like growth factor receptor binding"/>
    <property type="evidence" value="ECO:0000250"/>
    <property type="project" value="UniProtKB"/>
</dbReference>
<dbReference type="GO" id="GO:0008283">
    <property type="term" value="P:cell population proliferation"/>
    <property type="evidence" value="ECO:0000314"/>
    <property type="project" value="AgBase"/>
</dbReference>
<dbReference type="GO" id="GO:0042538">
    <property type="term" value="P:hyperosmotic salinity response"/>
    <property type="evidence" value="ECO:0000315"/>
    <property type="project" value="AgBase"/>
</dbReference>
<dbReference type="GO" id="GO:0048009">
    <property type="term" value="P:insulin-like growth factor receptor signaling pathway"/>
    <property type="evidence" value="ECO:0000250"/>
    <property type="project" value="UniProtKB"/>
</dbReference>
<dbReference type="GO" id="GO:0043066">
    <property type="term" value="P:negative regulation of apoptotic process"/>
    <property type="evidence" value="ECO:0000250"/>
    <property type="project" value="UniProtKB"/>
</dbReference>
<dbReference type="GO" id="GO:1903407">
    <property type="term" value="P:negative regulation of P-type sodium:potassium-exchanging transporter activity"/>
    <property type="evidence" value="ECO:0000315"/>
    <property type="project" value="AgBase"/>
</dbReference>
<dbReference type="GO" id="GO:0090201">
    <property type="term" value="P:negative regulation of release of cytochrome c from mitochondria"/>
    <property type="evidence" value="ECO:0000250"/>
    <property type="project" value="UniProtKB"/>
</dbReference>
<dbReference type="GO" id="GO:0034392">
    <property type="term" value="P:negative regulation of smooth muscle cell apoptotic process"/>
    <property type="evidence" value="ECO:0000250"/>
    <property type="project" value="UniProtKB"/>
</dbReference>
<dbReference type="GO" id="GO:0008284">
    <property type="term" value="P:positive regulation of cell population proliferation"/>
    <property type="evidence" value="ECO:0000250"/>
    <property type="project" value="UniProtKB"/>
</dbReference>
<dbReference type="GO" id="GO:0046326">
    <property type="term" value="P:positive regulation of D-glucose import"/>
    <property type="evidence" value="ECO:0000250"/>
    <property type="project" value="UniProtKB"/>
</dbReference>
<dbReference type="GO" id="GO:0045725">
    <property type="term" value="P:positive regulation of glycogen biosynthetic process"/>
    <property type="evidence" value="ECO:0000250"/>
    <property type="project" value="UniProtKB"/>
</dbReference>
<dbReference type="GO" id="GO:0043410">
    <property type="term" value="P:positive regulation of MAPK cascade"/>
    <property type="evidence" value="ECO:0000250"/>
    <property type="project" value="UniProtKB"/>
</dbReference>
<dbReference type="GO" id="GO:1903408">
    <property type="term" value="P:positive regulation of P-type sodium:potassium-exchanging transporter activity"/>
    <property type="evidence" value="ECO:0000315"/>
    <property type="project" value="AgBase"/>
</dbReference>
<dbReference type="GO" id="GO:0051897">
    <property type="term" value="P:positive regulation of phosphatidylinositol 3-kinase/protein kinase B signal transduction"/>
    <property type="evidence" value="ECO:0000318"/>
    <property type="project" value="GO_Central"/>
</dbReference>
<dbReference type="GO" id="GO:0051602">
    <property type="term" value="P:response to electrical stimulus"/>
    <property type="evidence" value="ECO:0000314"/>
    <property type="project" value="AgBase"/>
</dbReference>
<dbReference type="GO" id="GO:0032094">
    <property type="term" value="P:response to food"/>
    <property type="evidence" value="ECO:0000314"/>
    <property type="project" value="AgBase"/>
</dbReference>
<dbReference type="GO" id="GO:0060416">
    <property type="term" value="P:response to growth hormone"/>
    <property type="evidence" value="ECO:0000314"/>
    <property type="project" value="AgBase"/>
</dbReference>
<dbReference type="GO" id="GO:0032868">
    <property type="term" value="P:response to insulin"/>
    <property type="evidence" value="ECO:0000314"/>
    <property type="project" value="AgBase"/>
</dbReference>
<dbReference type="GO" id="GO:0071000">
    <property type="term" value="P:response to magnetism"/>
    <property type="evidence" value="ECO:0000314"/>
    <property type="project" value="AgBase"/>
</dbReference>
<dbReference type="CDD" id="cd04368">
    <property type="entry name" value="IlGF"/>
    <property type="match status" value="1"/>
</dbReference>
<dbReference type="FunFam" id="1.10.100.10:FF:000001">
    <property type="entry name" value="insulin-like growth factor I isoform X1"/>
    <property type="match status" value="1"/>
</dbReference>
<dbReference type="Gene3D" id="1.10.100.10">
    <property type="entry name" value="Insulin-like"/>
    <property type="match status" value="1"/>
</dbReference>
<dbReference type="InterPro" id="IPR022341">
    <property type="entry name" value="IGF-I"/>
</dbReference>
<dbReference type="InterPro" id="IPR016179">
    <property type="entry name" value="Insulin-like"/>
</dbReference>
<dbReference type="InterPro" id="IPR022350">
    <property type="entry name" value="Insulin-like_growth_factor"/>
</dbReference>
<dbReference type="InterPro" id="IPR036438">
    <property type="entry name" value="Insulin-like_sf"/>
</dbReference>
<dbReference type="InterPro" id="IPR022353">
    <property type="entry name" value="Insulin_CS"/>
</dbReference>
<dbReference type="InterPro" id="IPR022352">
    <property type="entry name" value="Insulin_family"/>
</dbReference>
<dbReference type="PANTHER" id="PTHR46845">
    <property type="entry name" value="INSULIN-LIKE GROWTH FACTOR I"/>
    <property type="match status" value="1"/>
</dbReference>
<dbReference type="PANTHER" id="PTHR46845:SF1">
    <property type="entry name" value="INSULIN-LIKE GROWTH FACTOR I"/>
    <property type="match status" value="1"/>
</dbReference>
<dbReference type="Pfam" id="PF00049">
    <property type="entry name" value="Insulin"/>
    <property type="match status" value="1"/>
</dbReference>
<dbReference type="PRINTS" id="PR02002">
    <property type="entry name" value="INSLNLIKEGF"/>
</dbReference>
<dbReference type="PRINTS" id="PR02005">
    <property type="entry name" value="INSLNLIKEGF1"/>
</dbReference>
<dbReference type="PRINTS" id="PR00276">
    <property type="entry name" value="INSULINFAMLY"/>
</dbReference>
<dbReference type="SMART" id="SM00078">
    <property type="entry name" value="IlGF"/>
    <property type="match status" value="1"/>
</dbReference>
<dbReference type="SUPFAM" id="SSF56994">
    <property type="entry name" value="Insulin-like"/>
    <property type="match status" value="1"/>
</dbReference>
<dbReference type="PROSITE" id="PS00262">
    <property type="entry name" value="INSULIN"/>
    <property type="match status" value="1"/>
</dbReference>